<comment type="function">
    <text evidence="1">Catalyzes the cleavage of cystathionine to homocysteine, pyruvate and ammonia during methionine biosynthesis.</text>
</comment>
<comment type="catalytic activity">
    <reaction evidence="1">
        <text>L,L-cystathionine + H2O = L-homocysteine + pyruvate + NH4(+)</text>
        <dbReference type="Rhea" id="RHEA:13965"/>
        <dbReference type="ChEBI" id="CHEBI:15361"/>
        <dbReference type="ChEBI" id="CHEBI:15377"/>
        <dbReference type="ChEBI" id="CHEBI:28938"/>
        <dbReference type="ChEBI" id="CHEBI:58161"/>
        <dbReference type="ChEBI" id="CHEBI:58199"/>
    </reaction>
</comment>
<comment type="catalytic activity">
    <reaction evidence="1">
        <text>an S-substituted L-cysteine + H2O = a thiol + pyruvate + NH4(+)</text>
        <dbReference type="Rhea" id="RHEA:18121"/>
        <dbReference type="ChEBI" id="CHEBI:15361"/>
        <dbReference type="ChEBI" id="CHEBI:15377"/>
        <dbReference type="ChEBI" id="CHEBI:28938"/>
        <dbReference type="ChEBI" id="CHEBI:29256"/>
        <dbReference type="ChEBI" id="CHEBI:58717"/>
        <dbReference type="EC" id="4.4.1.13"/>
    </reaction>
</comment>
<comment type="cofactor">
    <cofactor evidence="1">
        <name>pyridoxal 5'-phosphate</name>
        <dbReference type="ChEBI" id="CHEBI:597326"/>
    </cofactor>
</comment>
<comment type="pathway">
    <text evidence="1">Amino-acid biosynthesis; L-methionine biosynthesis via de novo pathway; L-homocysteine from L-cystathionine: step 1/1.</text>
</comment>
<comment type="subunit">
    <text evidence="1">Homotetramer.</text>
</comment>
<comment type="subcellular location">
    <subcellularLocation>
        <location evidence="1">Cytoplasm</location>
    </subcellularLocation>
</comment>
<comment type="developmental stage">
    <text evidence="2">More than twofold more abundant in the small cell variant (SCV) stage than in the large cell variant (LCV) stage (at protein level). LCVs are more metabolically active than SCVs.</text>
</comment>
<comment type="similarity">
    <text evidence="3">Belongs to the trans-sulfuration enzymes family.</text>
</comment>
<dbReference type="EC" id="4.4.1.13" evidence="1"/>
<dbReference type="EMBL" id="AE016828">
    <property type="protein sequence ID" value="AAO91512.1"/>
    <property type="molecule type" value="Genomic_DNA"/>
</dbReference>
<dbReference type="RefSeq" id="NP_820998.1">
    <property type="nucleotide sequence ID" value="NC_002971.4"/>
</dbReference>
<dbReference type="RefSeq" id="WP_010958610.1">
    <property type="nucleotide sequence ID" value="NZ_CCYB01000066.1"/>
</dbReference>
<dbReference type="SMR" id="Q83A83"/>
<dbReference type="STRING" id="227377.CBU_2025"/>
<dbReference type="EnsemblBacteria" id="AAO91512">
    <property type="protein sequence ID" value="AAO91512"/>
    <property type="gene ID" value="CBU_2025"/>
</dbReference>
<dbReference type="GeneID" id="1209938"/>
<dbReference type="KEGG" id="cbu:CBU_2025"/>
<dbReference type="PATRIC" id="fig|227377.7.peg.2017"/>
<dbReference type="eggNOG" id="COG0626">
    <property type="taxonomic scope" value="Bacteria"/>
</dbReference>
<dbReference type="HOGENOM" id="CLU_018986_2_0_6"/>
<dbReference type="OrthoDB" id="9805807at2"/>
<dbReference type="UniPathway" id="UPA00051">
    <property type="reaction ID" value="UER00078"/>
</dbReference>
<dbReference type="Proteomes" id="UP000002671">
    <property type="component" value="Chromosome"/>
</dbReference>
<dbReference type="GO" id="GO:0005737">
    <property type="term" value="C:cytoplasm"/>
    <property type="evidence" value="ECO:0000318"/>
    <property type="project" value="GO_Central"/>
</dbReference>
<dbReference type="GO" id="GO:0004123">
    <property type="term" value="F:cystathionine gamma-lyase activity"/>
    <property type="evidence" value="ECO:0000318"/>
    <property type="project" value="GO_Central"/>
</dbReference>
<dbReference type="GO" id="GO:0003962">
    <property type="term" value="F:cystathionine gamma-synthase activity"/>
    <property type="evidence" value="ECO:0000318"/>
    <property type="project" value="GO_Central"/>
</dbReference>
<dbReference type="GO" id="GO:0047804">
    <property type="term" value="F:cysteine-S-conjugate beta-lyase activity"/>
    <property type="evidence" value="ECO:0007669"/>
    <property type="project" value="UniProtKB-EC"/>
</dbReference>
<dbReference type="GO" id="GO:0030170">
    <property type="term" value="F:pyridoxal phosphate binding"/>
    <property type="evidence" value="ECO:0000318"/>
    <property type="project" value="GO_Central"/>
</dbReference>
<dbReference type="GO" id="GO:0019343">
    <property type="term" value="P:cysteine biosynthetic process via cystathionine"/>
    <property type="evidence" value="ECO:0000318"/>
    <property type="project" value="GO_Central"/>
</dbReference>
<dbReference type="GO" id="GO:0009086">
    <property type="term" value="P:methionine biosynthetic process"/>
    <property type="evidence" value="ECO:0007669"/>
    <property type="project" value="UniProtKB-KW"/>
</dbReference>
<dbReference type="GO" id="GO:0019346">
    <property type="term" value="P:transsulfuration"/>
    <property type="evidence" value="ECO:0000318"/>
    <property type="project" value="GO_Central"/>
</dbReference>
<dbReference type="CDD" id="cd00614">
    <property type="entry name" value="CGS_like"/>
    <property type="match status" value="1"/>
</dbReference>
<dbReference type="FunFam" id="3.90.1150.10:FF:000008">
    <property type="entry name" value="Cystathionine gamma-synthase"/>
    <property type="match status" value="1"/>
</dbReference>
<dbReference type="FunFam" id="3.40.640.10:FF:000009">
    <property type="entry name" value="Cystathionine gamma-synthase homolog"/>
    <property type="match status" value="1"/>
</dbReference>
<dbReference type="Gene3D" id="3.90.1150.10">
    <property type="entry name" value="Aspartate Aminotransferase, domain 1"/>
    <property type="match status" value="1"/>
</dbReference>
<dbReference type="Gene3D" id="3.40.640.10">
    <property type="entry name" value="Type I PLP-dependent aspartate aminotransferase-like (Major domain)"/>
    <property type="match status" value="1"/>
</dbReference>
<dbReference type="InterPro" id="IPR000277">
    <property type="entry name" value="Cys/Met-Metab_PyrdxlP-dep_enz"/>
</dbReference>
<dbReference type="InterPro" id="IPR054542">
    <property type="entry name" value="Cys_met_metab_PP"/>
</dbReference>
<dbReference type="InterPro" id="IPR015424">
    <property type="entry name" value="PyrdxlP-dep_Trfase"/>
</dbReference>
<dbReference type="InterPro" id="IPR015421">
    <property type="entry name" value="PyrdxlP-dep_Trfase_major"/>
</dbReference>
<dbReference type="InterPro" id="IPR015422">
    <property type="entry name" value="PyrdxlP-dep_Trfase_small"/>
</dbReference>
<dbReference type="NCBIfam" id="NF005871">
    <property type="entry name" value="PRK07811.1"/>
    <property type="match status" value="1"/>
</dbReference>
<dbReference type="PANTHER" id="PTHR11808:SF15">
    <property type="entry name" value="CYSTATHIONINE GAMMA-LYASE"/>
    <property type="match status" value="1"/>
</dbReference>
<dbReference type="PANTHER" id="PTHR11808">
    <property type="entry name" value="TRANS-SULFURATION ENZYME FAMILY MEMBER"/>
    <property type="match status" value="1"/>
</dbReference>
<dbReference type="Pfam" id="PF01053">
    <property type="entry name" value="Cys_Met_Meta_PP"/>
    <property type="match status" value="1"/>
</dbReference>
<dbReference type="PIRSF" id="PIRSF001434">
    <property type="entry name" value="CGS"/>
    <property type="match status" value="1"/>
</dbReference>
<dbReference type="SUPFAM" id="SSF53383">
    <property type="entry name" value="PLP-dependent transferases"/>
    <property type="match status" value="1"/>
</dbReference>
<dbReference type="PROSITE" id="PS00868">
    <property type="entry name" value="CYS_MET_METAB_PP"/>
    <property type="match status" value="1"/>
</dbReference>
<evidence type="ECO:0000250" key="1">
    <source>
        <dbReference type="UniProtKB" id="P06721"/>
    </source>
</evidence>
<evidence type="ECO:0000269" key="2">
    <source>
    </source>
</evidence>
<evidence type="ECO:0000305" key="3"/>
<feature type="chain" id="PRO_0000320579" description="Cystathionine beta-lyase">
    <location>
        <begin position="1"/>
        <end position="387"/>
    </location>
</feature>
<feature type="modified residue" description="N6-(pyridoxal phosphate)lysine" evidence="1">
    <location>
        <position position="204"/>
    </location>
</feature>
<gene>
    <name type="primary">metC</name>
    <name type="ordered locus">CBU_2025</name>
</gene>
<protein>
    <recommendedName>
        <fullName>Cystathionine beta-lyase</fullName>
        <shortName>CBL</shortName>
        <ecNumber evidence="1">4.4.1.13</ecNumber>
    </recommendedName>
    <alternativeName>
        <fullName>Beta-cystathionase</fullName>
    </alternativeName>
    <alternativeName>
        <fullName>Cysteine lyase</fullName>
    </alternativeName>
    <alternativeName>
        <fullName>Cysteine-S-conjugate beta-lyase</fullName>
    </alternativeName>
</protein>
<organism>
    <name type="scientific">Coxiella burnetii (strain RSA 493 / Nine Mile phase I)</name>
    <dbReference type="NCBI Taxonomy" id="227377"/>
    <lineage>
        <taxon>Bacteria</taxon>
        <taxon>Pseudomonadati</taxon>
        <taxon>Pseudomonadota</taxon>
        <taxon>Gammaproteobacteria</taxon>
        <taxon>Legionellales</taxon>
        <taxon>Coxiellaceae</taxon>
        <taxon>Coxiella</taxon>
    </lineage>
</organism>
<name>METC_COXBU</name>
<reference key="1">
    <citation type="journal article" date="2003" name="Proc. Natl. Acad. Sci. U.S.A.">
        <title>Complete genome sequence of the Q-fever pathogen, Coxiella burnetii.</title>
        <authorList>
            <person name="Seshadri R."/>
            <person name="Paulsen I.T."/>
            <person name="Eisen J.A."/>
            <person name="Read T.D."/>
            <person name="Nelson K.E."/>
            <person name="Nelson W.C."/>
            <person name="Ward N.L."/>
            <person name="Tettelin H."/>
            <person name="Davidsen T.M."/>
            <person name="Beanan M.J."/>
            <person name="DeBoy R.T."/>
            <person name="Daugherty S.C."/>
            <person name="Brinkac L.M."/>
            <person name="Madupu R."/>
            <person name="Dodson R.J."/>
            <person name="Khouri H.M."/>
            <person name="Lee K.H."/>
            <person name="Carty H.A."/>
            <person name="Scanlan D."/>
            <person name="Heinzen R.A."/>
            <person name="Thompson H.A."/>
            <person name="Samuel J.E."/>
            <person name="Fraser C.M."/>
            <person name="Heidelberg J.F."/>
        </authorList>
    </citation>
    <scope>NUCLEOTIDE SEQUENCE [LARGE SCALE GENOMIC DNA]</scope>
    <source>
        <strain>RSA 493 / Nine Mile phase I</strain>
    </source>
</reference>
<reference key="2">
    <citation type="journal article" date="2007" name="Infect. Immun.">
        <title>Proteome and antigen profiling of Coxiella burnetii developmental forms.</title>
        <authorList>
            <person name="Coleman S.A."/>
            <person name="Fischer E.R."/>
            <person name="Cockrell D.C."/>
            <person name="Voth D.E."/>
            <person name="Howe D."/>
            <person name="Mead D.J."/>
            <person name="Samuel J.E."/>
            <person name="Heinzen R.A."/>
        </authorList>
    </citation>
    <scope>IDENTIFICATION BY MASS SPECTROMETRY</scope>
    <scope>DEVELOPMENTAL STAGE</scope>
    <source>
        <strain>Nine Mile Crazy / RSA 514</strain>
    </source>
</reference>
<accession>Q83A83</accession>
<proteinExistence type="evidence at protein level"/>
<sequence>MTANNNKKSHIDTRVIHAGQKPDPLTGAVMTPIYTASTYAQKSPGVHQGYEYSRSQNPTRFAYERCVADLESGQHGFAFASGMAATATILELLQPGDHVVVMDDVYGGSYRLFENVRKRSAGLSFSFVDFTDENKVREAVTAKTKMLWVESPSNPRLKIVDLAKIAEIAKEKNIIAVADNTFATPIIQRPLELGFDIVTHSATKYLNGHSDIIGGVAVVGDNKTLAEQLKYLQNAIGAIAAPFDSFMVLRGLKTLAIRMERHCENAMQLAQWLEKHPKVKRVYYPGLPSHPQHSIAKKQMRYFGGMISVELKCDLNETKKVLERCQLFTLAESLGGVESLIEHPAIMTHASIPQAERQKLGITDGFIRLSVGIEAITDLRHDLEAAL</sequence>
<keyword id="KW-0028">Amino-acid biosynthesis</keyword>
<keyword id="KW-0963">Cytoplasm</keyword>
<keyword id="KW-0456">Lyase</keyword>
<keyword id="KW-0486">Methionine biosynthesis</keyword>
<keyword id="KW-0663">Pyridoxal phosphate</keyword>
<keyword id="KW-1185">Reference proteome</keyword>